<feature type="chain" id="PRO_0000180400" description="Ribonuclease 3">
    <location>
        <begin position="1"/>
        <end position="227"/>
    </location>
</feature>
<feature type="domain" description="RNase III" evidence="1">
    <location>
        <begin position="4"/>
        <end position="126"/>
    </location>
</feature>
<feature type="domain" description="DRBM" evidence="1">
    <location>
        <begin position="153"/>
        <end position="226"/>
    </location>
</feature>
<feature type="active site" evidence="1">
    <location>
        <position position="43"/>
    </location>
</feature>
<feature type="active site" evidence="1">
    <location>
        <position position="115"/>
    </location>
</feature>
<feature type="binding site" evidence="1">
    <location>
        <position position="39"/>
    </location>
    <ligand>
        <name>Mg(2+)</name>
        <dbReference type="ChEBI" id="CHEBI:18420"/>
    </ligand>
</feature>
<feature type="binding site" evidence="1">
    <location>
        <position position="112"/>
    </location>
    <ligand>
        <name>Mg(2+)</name>
        <dbReference type="ChEBI" id="CHEBI:18420"/>
    </ligand>
</feature>
<feature type="binding site" evidence="1">
    <location>
        <position position="115"/>
    </location>
    <ligand>
        <name>Mg(2+)</name>
        <dbReference type="ChEBI" id="CHEBI:18420"/>
    </ligand>
</feature>
<dbReference type="EC" id="3.1.26.3" evidence="1"/>
<dbReference type="EMBL" id="L42023">
    <property type="protein sequence ID" value="AAC21692.1"/>
    <property type="molecule type" value="Genomic_DNA"/>
</dbReference>
<dbReference type="PIR" id="G64042">
    <property type="entry name" value="G64042"/>
</dbReference>
<dbReference type="RefSeq" id="NP_438187.1">
    <property type="nucleotide sequence ID" value="NC_000907.1"/>
</dbReference>
<dbReference type="SMR" id="P44441"/>
<dbReference type="STRING" id="71421.HI_0014"/>
<dbReference type="EnsemblBacteria" id="AAC21692">
    <property type="protein sequence ID" value="AAC21692"/>
    <property type="gene ID" value="HI_0014"/>
</dbReference>
<dbReference type="KEGG" id="hin:HI_0014"/>
<dbReference type="PATRIC" id="fig|71421.8.peg.14"/>
<dbReference type="eggNOG" id="COG0571">
    <property type="taxonomic scope" value="Bacteria"/>
</dbReference>
<dbReference type="HOGENOM" id="CLU_000907_1_1_6"/>
<dbReference type="OrthoDB" id="9805026at2"/>
<dbReference type="PhylomeDB" id="P44441"/>
<dbReference type="BioCyc" id="HINF71421:G1GJ1-14-MONOMER"/>
<dbReference type="Proteomes" id="UP000000579">
    <property type="component" value="Chromosome"/>
</dbReference>
<dbReference type="GO" id="GO:0005829">
    <property type="term" value="C:cytosol"/>
    <property type="evidence" value="ECO:0000318"/>
    <property type="project" value="GO_Central"/>
</dbReference>
<dbReference type="GO" id="GO:0003725">
    <property type="term" value="F:double-stranded RNA binding"/>
    <property type="evidence" value="ECO:0000318"/>
    <property type="project" value="GO_Central"/>
</dbReference>
<dbReference type="GO" id="GO:0046872">
    <property type="term" value="F:metal ion binding"/>
    <property type="evidence" value="ECO:0007669"/>
    <property type="project" value="UniProtKB-KW"/>
</dbReference>
<dbReference type="GO" id="GO:0004525">
    <property type="term" value="F:ribonuclease III activity"/>
    <property type="evidence" value="ECO:0000318"/>
    <property type="project" value="GO_Central"/>
</dbReference>
<dbReference type="GO" id="GO:0019843">
    <property type="term" value="F:rRNA binding"/>
    <property type="evidence" value="ECO:0007669"/>
    <property type="project" value="UniProtKB-KW"/>
</dbReference>
<dbReference type="GO" id="GO:0006397">
    <property type="term" value="P:mRNA processing"/>
    <property type="evidence" value="ECO:0007669"/>
    <property type="project" value="UniProtKB-UniRule"/>
</dbReference>
<dbReference type="GO" id="GO:0010468">
    <property type="term" value="P:regulation of gene expression"/>
    <property type="evidence" value="ECO:0000318"/>
    <property type="project" value="GO_Central"/>
</dbReference>
<dbReference type="GO" id="GO:0006396">
    <property type="term" value="P:RNA processing"/>
    <property type="evidence" value="ECO:0000318"/>
    <property type="project" value="GO_Central"/>
</dbReference>
<dbReference type="GO" id="GO:0006364">
    <property type="term" value="P:rRNA processing"/>
    <property type="evidence" value="ECO:0007669"/>
    <property type="project" value="UniProtKB-UniRule"/>
</dbReference>
<dbReference type="GO" id="GO:0008033">
    <property type="term" value="P:tRNA processing"/>
    <property type="evidence" value="ECO:0007669"/>
    <property type="project" value="UniProtKB-KW"/>
</dbReference>
<dbReference type="CDD" id="cd10845">
    <property type="entry name" value="DSRM_RNAse_III_family"/>
    <property type="match status" value="1"/>
</dbReference>
<dbReference type="CDD" id="cd00593">
    <property type="entry name" value="RIBOc"/>
    <property type="match status" value="1"/>
</dbReference>
<dbReference type="FunFam" id="1.10.1520.10:FF:000001">
    <property type="entry name" value="Ribonuclease 3"/>
    <property type="match status" value="1"/>
</dbReference>
<dbReference type="FunFam" id="3.30.160.20:FF:000003">
    <property type="entry name" value="Ribonuclease 3"/>
    <property type="match status" value="1"/>
</dbReference>
<dbReference type="Gene3D" id="3.30.160.20">
    <property type="match status" value="1"/>
</dbReference>
<dbReference type="Gene3D" id="1.10.1520.10">
    <property type="entry name" value="Ribonuclease III domain"/>
    <property type="match status" value="1"/>
</dbReference>
<dbReference type="HAMAP" id="MF_00104">
    <property type="entry name" value="RNase_III"/>
    <property type="match status" value="1"/>
</dbReference>
<dbReference type="InterPro" id="IPR014720">
    <property type="entry name" value="dsRBD_dom"/>
</dbReference>
<dbReference type="InterPro" id="IPR011907">
    <property type="entry name" value="RNase_III"/>
</dbReference>
<dbReference type="InterPro" id="IPR000999">
    <property type="entry name" value="RNase_III_dom"/>
</dbReference>
<dbReference type="InterPro" id="IPR036389">
    <property type="entry name" value="RNase_III_sf"/>
</dbReference>
<dbReference type="NCBIfam" id="TIGR02191">
    <property type="entry name" value="RNaseIII"/>
    <property type="match status" value="1"/>
</dbReference>
<dbReference type="PANTHER" id="PTHR11207:SF0">
    <property type="entry name" value="RIBONUCLEASE 3"/>
    <property type="match status" value="1"/>
</dbReference>
<dbReference type="PANTHER" id="PTHR11207">
    <property type="entry name" value="RIBONUCLEASE III"/>
    <property type="match status" value="1"/>
</dbReference>
<dbReference type="Pfam" id="PF00035">
    <property type="entry name" value="dsrm"/>
    <property type="match status" value="1"/>
</dbReference>
<dbReference type="Pfam" id="PF14622">
    <property type="entry name" value="Ribonucleas_3_3"/>
    <property type="match status" value="1"/>
</dbReference>
<dbReference type="SMART" id="SM00358">
    <property type="entry name" value="DSRM"/>
    <property type="match status" value="1"/>
</dbReference>
<dbReference type="SMART" id="SM00535">
    <property type="entry name" value="RIBOc"/>
    <property type="match status" value="1"/>
</dbReference>
<dbReference type="SUPFAM" id="SSF54768">
    <property type="entry name" value="dsRNA-binding domain-like"/>
    <property type="match status" value="1"/>
</dbReference>
<dbReference type="SUPFAM" id="SSF69065">
    <property type="entry name" value="RNase III domain-like"/>
    <property type="match status" value="1"/>
</dbReference>
<dbReference type="PROSITE" id="PS50137">
    <property type="entry name" value="DS_RBD"/>
    <property type="match status" value="1"/>
</dbReference>
<dbReference type="PROSITE" id="PS00517">
    <property type="entry name" value="RNASE_3_1"/>
    <property type="match status" value="1"/>
</dbReference>
<dbReference type="PROSITE" id="PS50142">
    <property type="entry name" value="RNASE_3_2"/>
    <property type="match status" value="1"/>
</dbReference>
<sequence length="227" mass="25728">MNHLDRLERKIGYRFNDIALLKQALTHRSAATQHNERLEFLGDSILNFTIAEALYHQFPRCNEGELSRMRATLVREPTLAILARQFELGDYMSLGSGELKNGGFRRESILADCVEAIIGAMSLDQGLAVTTQVIRNWYQQLLAEIKPGDNQKDAKTRLQEYLQGKHLPLPTYEVVNIQGEAHCQIFTVKCKVKSAEKIDRTFVAKGSSRRKAEQAAAEQILKELDIK</sequence>
<comment type="function">
    <text evidence="1">Digests double-stranded RNA. Involved in the processing of primary rRNA transcript to yield the immediate precursors to the large and small rRNAs (23S and 16S). Processes some mRNAs, and tRNAs when they are encoded in the rRNA operon. Processes pre-crRNA and tracrRNA of type II CRISPR loci if present in the organism.</text>
</comment>
<comment type="catalytic activity">
    <reaction evidence="1">
        <text>Endonucleolytic cleavage to 5'-phosphomonoester.</text>
        <dbReference type="EC" id="3.1.26.3"/>
    </reaction>
</comment>
<comment type="cofactor">
    <cofactor evidence="1">
        <name>Mg(2+)</name>
        <dbReference type="ChEBI" id="CHEBI:18420"/>
    </cofactor>
</comment>
<comment type="subunit">
    <text evidence="1">Homodimer.</text>
</comment>
<comment type="subcellular location">
    <subcellularLocation>
        <location evidence="1">Cytoplasm</location>
    </subcellularLocation>
</comment>
<comment type="similarity">
    <text evidence="1">Belongs to the ribonuclease III family.</text>
</comment>
<accession>P44441</accession>
<gene>
    <name evidence="1" type="primary">rnc</name>
    <name type="ordered locus">HI_0014</name>
</gene>
<evidence type="ECO:0000255" key="1">
    <source>
        <dbReference type="HAMAP-Rule" id="MF_00104"/>
    </source>
</evidence>
<reference key="1">
    <citation type="journal article" date="1995" name="Science">
        <title>Whole-genome random sequencing and assembly of Haemophilus influenzae Rd.</title>
        <authorList>
            <person name="Fleischmann R.D."/>
            <person name="Adams M.D."/>
            <person name="White O."/>
            <person name="Clayton R.A."/>
            <person name="Kirkness E.F."/>
            <person name="Kerlavage A.R."/>
            <person name="Bult C.J."/>
            <person name="Tomb J.-F."/>
            <person name="Dougherty B.A."/>
            <person name="Merrick J.M."/>
            <person name="McKenney K."/>
            <person name="Sutton G.G."/>
            <person name="FitzHugh W."/>
            <person name="Fields C.A."/>
            <person name="Gocayne J.D."/>
            <person name="Scott J.D."/>
            <person name="Shirley R."/>
            <person name="Liu L.-I."/>
            <person name="Glodek A."/>
            <person name="Kelley J.M."/>
            <person name="Weidman J.F."/>
            <person name="Phillips C.A."/>
            <person name="Spriggs T."/>
            <person name="Hedblom E."/>
            <person name="Cotton M.D."/>
            <person name="Utterback T.R."/>
            <person name="Hanna M.C."/>
            <person name="Nguyen D.T."/>
            <person name="Saudek D.M."/>
            <person name="Brandon R.C."/>
            <person name="Fine L.D."/>
            <person name="Fritchman J.L."/>
            <person name="Fuhrmann J.L."/>
            <person name="Geoghagen N.S.M."/>
            <person name="Gnehm C.L."/>
            <person name="McDonald L.A."/>
            <person name="Small K.V."/>
            <person name="Fraser C.M."/>
            <person name="Smith H.O."/>
            <person name="Venter J.C."/>
        </authorList>
    </citation>
    <scope>NUCLEOTIDE SEQUENCE [LARGE SCALE GENOMIC DNA]</scope>
    <source>
        <strain>ATCC 51907 / DSM 11121 / KW20 / Rd</strain>
    </source>
</reference>
<proteinExistence type="inferred from homology"/>
<organism>
    <name type="scientific">Haemophilus influenzae (strain ATCC 51907 / DSM 11121 / KW20 / Rd)</name>
    <dbReference type="NCBI Taxonomy" id="71421"/>
    <lineage>
        <taxon>Bacteria</taxon>
        <taxon>Pseudomonadati</taxon>
        <taxon>Pseudomonadota</taxon>
        <taxon>Gammaproteobacteria</taxon>
        <taxon>Pasteurellales</taxon>
        <taxon>Pasteurellaceae</taxon>
        <taxon>Haemophilus</taxon>
    </lineage>
</organism>
<name>RNC_HAEIN</name>
<keyword id="KW-0963">Cytoplasm</keyword>
<keyword id="KW-0255">Endonuclease</keyword>
<keyword id="KW-0378">Hydrolase</keyword>
<keyword id="KW-0460">Magnesium</keyword>
<keyword id="KW-0479">Metal-binding</keyword>
<keyword id="KW-0507">mRNA processing</keyword>
<keyword id="KW-0540">Nuclease</keyword>
<keyword id="KW-1185">Reference proteome</keyword>
<keyword id="KW-0694">RNA-binding</keyword>
<keyword id="KW-0698">rRNA processing</keyword>
<keyword id="KW-0699">rRNA-binding</keyword>
<keyword id="KW-0819">tRNA processing</keyword>
<protein>
    <recommendedName>
        <fullName evidence="1">Ribonuclease 3</fullName>
        <ecNumber evidence="1">3.1.26.3</ecNumber>
    </recommendedName>
    <alternativeName>
        <fullName evidence="1">Ribonuclease III</fullName>
        <shortName evidence="1">RNase III</shortName>
    </alternativeName>
</protein>